<dbReference type="EMBL" id="CU329671">
    <property type="protein sequence ID" value="CAA17693.1"/>
    <property type="molecule type" value="Genomic_DNA"/>
</dbReference>
<dbReference type="PIR" id="T40394">
    <property type="entry name" value="T40394"/>
</dbReference>
<dbReference type="RefSeq" id="NP_596742.1">
    <property type="nucleotide sequence ID" value="NM_001023762.2"/>
</dbReference>
<dbReference type="SMR" id="O43051"/>
<dbReference type="BioGRID" id="277199">
    <property type="interactions" value="4"/>
</dbReference>
<dbReference type="FunCoup" id="O43051">
    <property type="interactions" value="768"/>
</dbReference>
<dbReference type="STRING" id="284812.O43051"/>
<dbReference type="iPTMnet" id="O43051"/>
<dbReference type="PaxDb" id="4896-SPBC3F6.04c.1"/>
<dbReference type="EnsemblFungi" id="SPBC3F6.04c.1">
    <property type="protein sequence ID" value="SPBC3F6.04c.1:pep"/>
    <property type="gene ID" value="SPBC3F6.04c"/>
</dbReference>
<dbReference type="GeneID" id="2540674"/>
<dbReference type="KEGG" id="spo:2540674"/>
<dbReference type="PomBase" id="SPBC3F6.04c">
    <property type="gene designation" value="nop14"/>
</dbReference>
<dbReference type="VEuPathDB" id="FungiDB:SPBC3F6.04c"/>
<dbReference type="eggNOG" id="KOG2147">
    <property type="taxonomic scope" value="Eukaryota"/>
</dbReference>
<dbReference type="HOGENOM" id="CLU_008874_0_0_1"/>
<dbReference type="InParanoid" id="O43051"/>
<dbReference type="OMA" id="KSCWPSL"/>
<dbReference type="PhylomeDB" id="O43051"/>
<dbReference type="Reactome" id="R-SPO-6791226">
    <property type="pathway name" value="Major pathway of rRNA processing in the nucleolus and cytosol"/>
</dbReference>
<dbReference type="PRO" id="PR:O43051"/>
<dbReference type="Proteomes" id="UP000002485">
    <property type="component" value="Chromosome II"/>
</dbReference>
<dbReference type="GO" id="GO:0030692">
    <property type="term" value="C:Noc4p-Nop14p complex"/>
    <property type="evidence" value="ECO:0000318"/>
    <property type="project" value="GO_Central"/>
</dbReference>
<dbReference type="GO" id="GO:0005730">
    <property type="term" value="C:nucleolus"/>
    <property type="evidence" value="ECO:0007005"/>
    <property type="project" value="PomBase"/>
</dbReference>
<dbReference type="GO" id="GO:0005634">
    <property type="term" value="C:nucleus"/>
    <property type="evidence" value="ECO:0007005"/>
    <property type="project" value="PomBase"/>
</dbReference>
<dbReference type="GO" id="GO:0032040">
    <property type="term" value="C:small-subunit processome"/>
    <property type="evidence" value="ECO:0000318"/>
    <property type="project" value="GO_Central"/>
</dbReference>
<dbReference type="GO" id="GO:0030515">
    <property type="term" value="F:snoRNA binding"/>
    <property type="evidence" value="ECO:0000250"/>
    <property type="project" value="UniProtKB"/>
</dbReference>
<dbReference type="GO" id="GO:0030490">
    <property type="term" value="P:maturation of SSU-rRNA"/>
    <property type="evidence" value="ECO:0000318"/>
    <property type="project" value="GO_Central"/>
</dbReference>
<dbReference type="GO" id="GO:0042274">
    <property type="term" value="P:ribosomal small subunit biogenesis"/>
    <property type="evidence" value="ECO:0000250"/>
    <property type="project" value="UniProtKB"/>
</dbReference>
<dbReference type="InterPro" id="IPR007276">
    <property type="entry name" value="Nop14"/>
</dbReference>
<dbReference type="PANTHER" id="PTHR23183">
    <property type="entry name" value="NOP14"/>
    <property type="match status" value="1"/>
</dbReference>
<dbReference type="PANTHER" id="PTHR23183:SF0">
    <property type="entry name" value="NUCLEOLAR PROTEIN 14"/>
    <property type="match status" value="1"/>
</dbReference>
<dbReference type="Pfam" id="PF04147">
    <property type="entry name" value="Nop14"/>
    <property type="match status" value="1"/>
</dbReference>
<sequence>MGKNGSQLKNLKSSIRQANLGTRPNNKKSRTRSTESHEDRQAKVQKIQSDFNLFDRQFTKRKFDVGGRRVKGTEGKPGVSRGVGEELRRRTIGAELKKRNRSGAIIDRRFGENNPHLSVEEKMLERFSREQQRRSKRELYNLDAEDVLTHGNRPLSDIDSFEEPGFGLDEGEELNDEVVRRMHFGGFEDSDAENEKEGEGAHKSKREVMSEIIAKSKHYKAERQAEKERYEDEREKLDEQMEDLQSFLSDYKKASRKSGIKTQRPIISDGDARYDSFVREMVFDKRAHPTERTKTEEELAQIEADRLRELEDQRISRMEHYQEDSASEAGSIEDEQATDNVFGFGKGLEQENEEEWNGINEEAEESEDEESVNSDTSFVDDEQLKVEEQPLVGSAIKNEGSEKASLAYTYPCPTSHVEFVQLLKGLDYKDYPTVVSRIRTLHHVKLHPDNKSRLENFSVILLQHILHLTRQPMISMELLEHLTEHLHSLAQQFPSALGISFISVVEGMRKRLAKSYVYPEIKFPEISDLLFFNLTGSIFPTSDKKHIVVSPVMLTMAESLSQSPADSLSDVCKKLYIANLFLKFQSYSHRYVPEVITAVSQALYLLYPNFISIVPGTFALPDSLKEKQNLFAIQDISLDEPQRLSLYELEELPTGLLQSSILFITLNLIEMAIDIYFKEQAFIEIFVPIMDMLQLYSLKKELLSKRLSEKLLSTLQAVSDSIESAKANRKPLALQSHRPLGITSQVPKFEEGYSLDKSSHDIDPERAQLNKLRAQHRDAKKGAIRTLRKDARFIARERRQEQRAKDQAYNEKMRKLENRLQHFDPAV</sequence>
<proteinExistence type="evidence at protein level"/>
<keyword id="KW-0539">Nucleus</keyword>
<keyword id="KW-0597">Phosphoprotein</keyword>
<keyword id="KW-1185">Reference proteome</keyword>
<keyword id="KW-0690">Ribosome biogenesis</keyword>
<keyword id="KW-0698">rRNA processing</keyword>
<feature type="chain" id="PRO_0000137161" description="Probable nucleolar complex protein 14">
    <location>
        <begin position="1"/>
        <end position="827"/>
    </location>
</feature>
<feature type="region of interest" description="Disordered" evidence="2">
    <location>
        <begin position="1"/>
        <end position="47"/>
    </location>
</feature>
<feature type="region of interest" description="Disordered" evidence="2">
    <location>
        <begin position="215"/>
        <end position="238"/>
    </location>
</feature>
<feature type="region of interest" description="Disordered" evidence="2">
    <location>
        <begin position="349"/>
        <end position="384"/>
    </location>
</feature>
<feature type="region of interest" description="Disordered" evidence="2">
    <location>
        <begin position="798"/>
        <end position="827"/>
    </location>
</feature>
<feature type="compositionally biased region" description="Polar residues" evidence="2">
    <location>
        <begin position="1"/>
        <end position="24"/>
    </location>
</feature>
<feature type="compositionally biased region" description="Basic and acidic residues" evidence="2">
    <location>
        <begin position="32"/>
        <end position="42"/>
    </location>
</feature>
<feature type="compositionally biased region" description="Basic and acidic residues" evidence="2">
    <location>
        <begin position="219"/>
        <end position="238"/>
    </location>
</feature>
<feature type="compositionally biased region" description="Acidic residues" evidence="2">
    <location>
        <begin position="350"/>
        <end position="372"/>
    </location>
</feature>
<feature type="modified residue" description="Phosphoserine" evidence="3">
    <location>
        <position position="190"/>
    </location>
</feature>
<organism>
    <name type="scientific">Schizosaccharomyces pombe (strain 972 / ATCC 24843)</name>
    <name type="common">Fission yeast</name>
    <dbReference type="NCBI Taxonomy" id="284812"/>
    <lineage>
        <taxon>Eukaryota</taxon>
        <taxon>Fungi</taxon>
        <taxon>Dikarya</taxon>
        <taxon>Ascomycota</taxon>
        <taxon>Taphrinomycotina</taxon>
        <taxon>Schizosaccharomycetes</taxon>
        <taxon>Schizosaccharomycetales</taxon>
        <taxon>Schizosaccharomycetaceae</taxon>
        <taxon>Schizosaccharomyces</taxon>
    </lineage>
</organism>
<gene>
    <name type="primary">nop14</name>
    <name type="ORF">SPBC3F6.04c</name>
</gene>
<reference key="1">
    <citation type="journal article" date="2002" name="Nature">
        <title>The genome sequence of Schizosaccharomyces pombe.</title>
        <authorList>
            <person name="Wood V."/>
            <person name="Gwilliam R."/>
            <person name="Rajandream M.A."/>
            <person name="Lyne M.H."/>
            <person name="Lyne R."/>
            <person name="Stewart A."/>
            <person name="Sgouros J.G."/>
            <person name="Peat N."/>
            <person name="Hayles J."/>
            <person name="Baker S.G."/>
            <person name="Basham D."/>
            <person name="Bowman S."/>
            <person name="Brooks K."/>
            <person name="Brown D."/>
            <person name="Brown S."/>
            <person name="Chillingworth T."/>
            <person name="Churcher C.M."/>
            <person name="Collins M."/>
            <person name="Connor R."/>
            <person name="Cronin A."/>
            <person name="Davis P."/>
            <person name="Feltwell T."/>
            <person name="Fraser A."/>
            <person name="Gentles S."/>
            <person name="Goble A."/>
            <person name="Hamlin N."/>
            <person name="Harris D.E."/>
            <person name="Hidalgo J."/>
            <person name="Hodgson G."/>
            <person name="Holroyd S."/>
            <person name="Hornsby T."/>
            <person name="Howarth S."/>
            <person name="Huckle E.J."/>
            <person name="Hunt S."/>
            <person name="Jagels K."/>
            <person name="James K.D."/>
            <person name="Jones L."/>
            <person name="Jones M."/>
            <person name="Leather S."/>
            <person name="McDonald S."/>
            <person name="McLean J."/>
            <person name="Mooney P."/>
            <person name="Moule S."/>
            <person name="Mungall K.L."/>
            <person name="Murphy L.D."/>
            <person name="Niblett D."/>
            <person name="Odell C."/>
            <person name="Oliver K."/>
            <person name="O'Neil S."/>
            <person name="Pearson D."/>
            <person name="Quail M.A."/>
            <person name="Rabbinowitsch E."/>
            <person name="Rutherford K.M."/>
            <person name="Rutter S."/>
            <person name="Saunders D."/>
            <person name="Seeger K."/>
            <person name="Sharp S."/>
            <person name="Skelton J."/>
            <person name="Simmonds M.N."/>
            <person name="Squares R."/>
            <person name="Squares S."/>
            <person name="Stevens K."/>
            <person name="Taylor K."/>
            <person name="Taylor R.G."/>
            <person name="Tivey A."/>
            <person name="Walsh S.V."/>
            <person name="Warren T."/>
            <person name="Whitehead S."/>
            <person name="Woodward J.R."/>
            <person name="Volckaert G."/>
            <person name="Aert R."/>
            <person name="Robben J."/>
            <person name="Grymonprez B."/>
            <person name="Weltjens I."/>
            <person name="Vanstreels E."/>
            <person name="Rieger M."/>
            <person name="Schaefer M."/>
            <person name="Mueller-Auer S."/>
            <person name="Gabel C."/>
            <person name="Fuchs M."/>
            <person name="Duesterhoeft A."/>
            <person name="Fritzc C."/>
            <person name="Holzer E."/>
            <person name="Moestl D."/>
            <person name="Hilbert H."/>
            <person name="Borzym K."/>
            <person name="Langer I."/>
            <person name="Beck A."/>
            <person name="Lehrach H."/>
            <person name="Reinhardt R."/>
            <person name="Pohl T.M."/>
            <person name="Eger P."/>
            <person name="Zimmermann W."/>
            <person name="Wedler H."/>
            <person name="Wambutt R."/>
            <person name="Purnelle B."/>
            <person name="Goffeau A."/>
            <person name="Cadieu E."/>
            <person name="Dreano S."/>
            <person name="Gloux S."/>
            <person name="Lelaure V."/>
            <person name="Mottier S."/>
            <person name="Galibert F."/>
            <person name="Aves S.J."/>
            <person name="Xiang Z."/>
            <person name="Hunt C."/>
            <person name="Moore K."/>
            <person name="Hurst S.M."/>
            <person name="Lucas M."/>
            <person name="Rochet M."/>
            <person name="Gaillardin C."/>
            <person name="Tallada V.A."/>
            <person name="Garzon A."/>
            <person name="Thode G."/>
            <person name="Daga R.R."/>
            <person name="Cruzado L."/>
            <person name="Jimenez J."/>
            <person name="Sanchez M."/>
            <person name="del Rey F."/>
            <person name="Benito J."/>
            <person name="Dominguez A."/>
            <person name="Revuelta J.L."/>
            <person name="Moreno S."/>
            <person name="Armstrong J."/>
            <person name="Forsburg S.L."/>
            <person name="Cerutti L."/>
            <person name="Lowe T."/>
            <person name="McCombie W.R."/>
            <person name="Paulsen I."/>
            <person name="Potashkin J."/>
            <person name="Shpakovski G.V."/>
            <person name="Ussery D."/>
            <person name="Barrell B.G."/>
            <person name="Nurse P."/>
        </authorList>
    </citation>
    <scope>NUCLEOTIDE SEQUENCE [LARGE SCALE GENOMIC DNA]</scope>
    <source>
        <strain>972 / ATCC 24843</strain>
    </source>
</reference>
<reference key="2">
    <citation type="journal article" date="2008" name="J. Proteome Res.">
        <title>Phosphoproteome analysis of fission yeast.</title>
        <authorList>
            <person name="Wilson-Grady J.T."/>
            <person name="Villen J."/>
            <person name="Gygi S.P."/>
        </authorList>
    </citation>
    <scope>PHOSPHORYLATION [LARGE SCALE ANALYSIS] AT SER-190</scope>
    <scope>IDENTIFICATION BY MASS SPECTROMETRY</scope>
</reference>
<name>NOP14_SCHPO</name>
<accession>O43051</accession>
<comment type="function">
    <text evidence="1">Involved in nucleolar processing of pre-18S ribosomal RNA. Has a role in the nuclear export of 40S pre-ribosomal subunit to the cytoplasm (By similarity).</text>
</comment>
<comment type="subunit">
    <text evidence="1">Component of the ribosomal small subunit (SSU) processome.</text>
</comment>
<comment type="subcellular location">
    <subcellularLocation>
        <location evidence="1">Nucleus</location>
        <location evidence="1">Nucleolus</location>
    </subcellularLocation>
</comment>
<comment type="similarity">
    <text evidence="4">Belongs to the NOP14 family.</text>
</comment>
<protein>
    <recommendedName>
        <fullName>Probable nucleolar complex protein 14</fullName>
    </recommendedName>
</protein>
<evidence type="ECO:0000250" key="1"/>
<evidence type="ECO:0000256" key="2">
    <source>
        <dbReference type="SAM" id="MobiDB-lite"/>
    </source>
</evidence>
<evidence type="ECO:0000269" key="3">
    <source>
    </source>
</evidence>
<evidence type="ECO:0000305" key="4"/>